<protein>
    <recommendedName>
        <fullName>Ras-related protein RABC2b</fullName>
        <shortName>AtRABC2b</shortName>
    </recommendedName>
    <alternativeName>
        <fullName>Ras-related protein Rab18C</fullName>
        <shortName>AtRab18C</shortName>
    </alternativeName>
</protein>
<reference key="1">
    <citation type="journal article" date="2000" name="Nature">
        <title>Sequence and analysis of chromosome 3 of the plant Arabidopsis thaliana.</title>
        <authorList>
            <person name="Salanoubat M."/>
            <person name="Lemcke K."/>
            <person name="Rieger M."/>
            <person name="Ansorge W."/>
            <person name="Unseld M."/>
            <person name="Fartmann B."/>
            <person name="Valle G."/>
            <person name="Bloecker H."/>
            <person name="Perez-Alonso M."/>
            <person name="Obermaier B."/>
            <person name="Delseny M."/>
            <person name="Boutry M."/>
            <person name="Grivell L.A."/>
            <person name="Mache R."/>
            <person name="Puigdomenech P."/>
            <person name="De Simone V."/>
            <person name="Choisne N."/>
            <person name="Artiguenave F."/>
            <person name="Robert C."/>
            <person name="Brottier P."/>
            <person name="Wincker P."/>
            <person name="Cattolico L."/>
            <person name="Weissenbach J."/>
            <person name="Saurin W."/>
            <person name="Quetier F."/>
            <person name="Schaefer M."/>
            <person name="Mueller-Auer S."/>
            <person name="Gabel C."/>
            <person name="Fuchs M."/>
            <person name="Benes V."/>
            <person name="Wurmbach E."/>
            <person name="Drzonek H."/>
            <person name="Erfle H."/>
            <person name="Jordan N."/>
            <person name="Bangert S."/>
            <person name="Wiedelmann R."/>
            <person name="Kranz H."/>
            <person name="Voss H."/>
            <person name="Holland R."/>
            <person name="Brandt P."/>
            <person name="Nyakatura G."/>
            <person name="Vezzi A."/>
            <person name="D'Angelo M."/>
            <person name="Pallavicini A."/>
            <person name="Toppo S."/>
            <person name="Simionati B."/>
            <person name="Conrad A."/>
            <person name="Hornischer K."/>
            <person name="Kauer G."/>
            <person name="Loehnert T.-H."/>
            <person name="Nordsiek G."/>
            <person name="Reichelt J."/>
            <person name="Scharfe M."/>
            <person name="Schoen O."/>
            <person name="Bargues M."/>
            <person name="Terol J."/>
            <person name="Climent J."/>
            <person name="Navarro P."/>
            <person name="Collado C."/>
            <person name="Perez-Perez A."/>
            <person name="Ottenwaelder B."/>
            <person name="Duchemin D."/>
            <person name="Cooke R."/>
            <person name="Laudie M."/>
            <person name="Berger-Llauro C."/>
            <person name="Purnelle B."/>
            <person name="Masuy D."/>
            <person name="de Haan M."/>
            <person name="Maarse A.C."/>
            <person name="Alcaraz J.-P."/>
            <person name="Cottet A."/>
            <person name="Casacuberta E."/>
            <person name="Monfort A."/>
            <person name="Argiriou A."/>
            <person name="Flores M."/>
            <person name="Liguori R."/>
            <person name="Vitale D."/>
            <person name="Mannhaupt G."/>
            <person name="Haase D."/>
            <person name="Schoof H."/>
            <person name="Rudd S."/>
            <person name="Zaccaria P."/>
            <person name="Mewes H.-W."/>
            <person name="Mayer K.F.X."/>
            <person name="Kaul S."/>
            <person name="Town C.D."/>
            <person name="Koo H.L."/>
            <person name="Tallon L.J."/>
            <person name="Jenkins J."/>
            <person name="Rooney T."/>
            <person name="Rizzo M."/>
            <person name="Walts A."/>
            <person name="Utterback T."/>
            <person name="Fujii C.Y."/>
            <person name="Shea T.P."/>
            <person name="Creasy T.H."/>
            <person name="Haas B."/>
            <person name="Maiti R."/>
            <person name="Wu D."/>
            <person name="Peterson J."/>
            <person name="Van Aken S."/>
            <person name="Pai G."/>
            <person name="Militscher J."/>
            <person name="Sellers P."/>
            <person name="Gill J.E."/>
            <person name="Feldblyum T.V."/>
            <person name="Preuss D."/>
            <person name="Lin X."/>
            <person name="Nierman W.C."/>
            <person name="Salzberg S.L."/>
            <person name="White O."/>
            <person name="Venter J.C."/>
            <person name="Fraser C.M."/>
            <person name="Kaneko T."/>
            <person name="Nakamura Y."/>
            <person name="Sato S."/>
            <person name="Kato T."/>
            <person name="Asamizu E."/>
            <person name="Sasamoto S."/>
            <person name="Kimura T."/>
            <person name="Idesawa K."/>
            <person name="Kawashima K."/>
            <person name="Kishida Y."/>
            <person name="Kiyokawa C."/>
            <person name="Kohara M."/>
            <person name="Matsumoto M."/>
            <person name="Matsuno A."/>
            <person name="Muraki A."/>
            <person name="Nakayama S."/>
            <person name="Nakazaki N."/>
            <person name="Shinpo S."/>
            <person name="Takeuchi C."/>
            <person name="Wada T."/>
            <person name="Watanabe A."/>
            <person name="Yamada M."/>
            <person name="Yasuda M."/>
            <person name="Tabata S."/>
        </authorList>
    </citation>
    <scope>NUCLEOTIDE SEQUENCE [LARGE SCALE GENOMIC DNA]</scope>
    <source>
        <strain>cv. Columbia</strain>
    </source>
</reference>
<reference key="2">
    <citation type="journal article" date="2017" name="Plant J.">
        <title>Araport11: a complete reannotation of the Arabidopsis thaliana reference genome.</title>
        <authorList>
            <person name="Cheng C.Y."/>
            <person name="Krishnakumar V."/>
            <person name="Chan A.P."/>
            <person name="Thibaud-Nissen F."/>
            <person name="Schobel S."/>
            <person name="Town C.D."/>
        </authorList>
    </citation>
    <scope>GENOME REANNOTATION</scope>
    <source>
        <strain>cv. Columbia</strain>
    </source>
</reference>
<reference key="3">
    <citation type="submission" date="2004-03" db="EMBL/GenBank/DDBJ databases">
        <title>Arabidopsis ORF clones.</title>
        <authorList>
            <person name="Cheuk R.F."/>
            <person name="Chen H."/>
            <person name="Kim C.J."/>
            <person name="Shinn P."/>
            <person name="Ecker J.R."/>
        </authorList>
    </citation>
    <scope>NUCLEOTIDE SEQUENCE [LARGE SCALE MRNA]</scope>
    <source>
        <strain>cv. Columbia</strain>
    </source>
</reference>
<reference key="4">
    <citation type="submission" date="2004-04" db="EMBL/GenBank/DDBJ databases">
        <title>Arabidopsis ORF clones.</title>
        <authorList>
            <person name="Shinn P."/>
            <person name="Chen H."/>
            <person name="Cheuk R.F."/>
            <person name="Kim C.J."/>
            <person name="Ecker J.R."/>
        </authorList>
    </citation>
    <scope>NUCLEOTIDE SEQUENCE [LARGE SCALE MRNA]</scope>
    <source>
        <strain>cv. Columbia</strain>
    </source>
</reference>
<reference key="5">
    <citation type="journal article" date="2003" name="Plant Physiol.">
        <title>Analysis of the small GTPase gene superfamily of Arabidopsis.</title>
        <authorList>
            <person name="Vernoud V."/>
            <person name="Horton A.C."/>
            <person name="Yang Z."/>
            <person name="Nielsen E."/>
        </authorList>
    </citation>
    <scope>GENE FAMILY</scope>
    <scope>NOMENCLATURE</scope>
</reference>
<keyword id="KW-1003">Cell membrane</keyword>
<keyword id="KW-0342">GTP-binding</keyword>
<keyword id="KW-0449">Lipoprotein</keyword>
<keyword id="KW-0472">Membrane</keyword>
<keyword id="KW-0547">Nucleotide-binding</keyword>
<keyword id="KW-0636">Prenylation</keyword>
<keyword id="KW-0653">Protein transport</keyword>
<keyword id="KW-1185">Reference proteome</keyword>
<keyword id="KW-0813">Transport</keyword>
<dbReference type="EMBL" id="AC015985">
    <property type="protein sequence ID" value="AAF23245.1"/>
    <property type="molecule type" value="Genomic_DNA"/>
</dbReference>
<dbReference type="EMBL" id="CP002686">
    <property type="protein sequence ID" value="AEE74829.1"/>
    <property type="molecule type" value="Genomic_DNA"/>
</dbReference>
<dbReference type="EMBL" id="CP002686">
    <property type="protein sequence ID" value="AEE74830.1"/>
    <property type="molecule type" value="Genomic_DNA"/>
</dbReference>
<dbReference type="EMBL" id="CP002686">
    <property type="protein sequence ID" value="AEE74831.1"/>
    <property type="molecule type" value="Genomic_DNA"/>
</dbReference>
<dbReference type="EMBL" id="BT012209">
    <property type="protein sequence ID" value="AAS76696.1"/>
    <property type="molecule type" value="mRNA"/>
</dbReference>
<dbReference type="EMBL" id="BT012396">
    <property type="protein sequence ID" value="AAS88786.1"/>
    <property type="molecule type" value="mRNA"/>
</dbReference>
<dbReference type="RefSeq" id="NP_001189850.1">
    <property type="nucleotide sequence ID" value="NM_001202921.2"/>
</dbReference>
<dbReference type="RefSeq" id="NP_001189851.1">
    <property type="nucleotide sequence ID" value="NM_001202922.1"/>
</dbReference>
<dbReference type="RefSeq" id="NP_187602.1">
    <property type="nucleotide sequence ID" value="NM_111826.4"/>
</dbReference>
<dbReference type="SMR" id="Q9SF92"/>
<dbReference type="BioGRID" id="5483">
    <property type="interactions" value="1"/>
</dbReference>
<dbReference type="FunCoup" id="Q9SF92">
    <property type="interactions" value="2832"/>
</dbReference>
<dbReference type="IntAct" id="Q9SF92">
    <property type="interactions" value="1"/>
</dbReference>
<dbReference type="STRING" id="3702.Q9SF92"/>
<dbReference type="iPTMnet" id="Q9SF92"/>
<dbReference type="PaxDb" id="3702-AT3G09910.1"/>
<dbReference type="ProteomicsDB" id="236450"/>
<dbReference type="EnsemblPlants" id="AT3G09910.1">
    <property type="protein sequence ID" value="AT3G09910.1"/>
    <property type="gene ID" value="AT3G09910"/>
</dbReference>
<dbReference type="EnsemblPlants" id="AT3G09910.2">
    <property type="protein sequence ID" value="AT3G09910.2"/>
    <property type="gene ID" value="AT3G09910"/>
</dbReference>
<dbReference type="EnsemblPlants" id="AT3G09910.3">
    <property type="protein sequence ID" value="AT3G09910.3"/>
    <property type="gene ID" value="AT3G09910"/>
</dbReference>
<dbReference type="GeneID" id="820149"/>
<dbReference type="Gramene" id="AT3G09910.1">
    <property type="protein sequence ID" value="AT3G09910.1"/>
    <property type="gene ID" value="AT3G09910"/>
</dbReference>
<dbReference type="Gramene" id="AT3G09910.2">
    <property type="protein sequence ID" value="AT3G09910.2"/>
    <property type="gene ID" value="AT3G09910"/>
</dbReference>
<dbReference type="Gramene" id="AT3G09910.3">
    <property type="protein sequence ID" value="AT3G09910.3"/>
    <property type="gene ID" value="AT3G09910"/>
</dbReference>
<dbReference type="KEGG" id="ath:AT3G09910"/>
<dbReference type="Araport" id="AT3G09910"/>
<dbReference type="TAIR" id="AT3G09910">
    <property type="gene designation" value="RABC2B"/>
</dbReference>
<dbReference type="eggNOG" id="KOG0080">
    <property type="taxonomic scope" value="Eukaryota"/>
</dbReference>
<dbReference type="HOGENOM" id="CLU_041217_10_1_1"/>
<dbReference type="InParanoid" id="Q9SF92"/>
<dbReference type="OMA" id="NDDSGCC"/>
<dbReference type="OrthoDB" id="9989112at2759"/>
<dbReference type="PhylomeDB" id="Q9SF92"/>
<dbReference type="PRO" id="PR:Q9SF92"/>
<dbReference type="Proteomes" id="UP000006548">
    <property type="component" value="Chromosome 3"/>
</dbReference>
<dbReference type="ExpressionAtlas" id="Q9SF92">
    <property type="expression patterns" value="baseline and differential"/>
</dbReference>
<dbReference type="GO" id="GO:0005886">
    <property type="term" value="C:plasma membrane"/>
    <property type="evidence" value="ECO:0007669"/>
    <property type="project" value="UniProtKB-SubCell"/>
</dbReference>
<dbReference type="GO" id="GO:0005525">
    <property type="term" value="F:GTP binding"/>
    <property type="evidence" value="ECO:0007669"/>
    <property type="project" value="UniProtKB-KW"/>
</dbReference>
<dbReference type="GO" id="GO:0003924">
    <property type="term" value="F:GTPase activity"/>
    <property type="evidence" value="ECO:0007669"/>
    <property type="project" value="InterPro"/>
</dbReference>
<dbReference type="GO" id="GO:0015031">
    <property type="term" value="P:protein transport"/>
    <property type="evidence" value="ECO:0007669"/>
    <property type="project" value="UniProtKB-KW"/>
</dbReference>
<dbReference type="FunFam" id="3.40.50.300:FF:000456">
    <property type="entry name" value="Ras-related protein RABC1"/>
    <property type="match status" value="1"/>
</dbReference>
<dbReference type="Gene3D" id="3.40.50.300">
    <property type="entry name" value="P-loop containing nucleotide triphosphate hydrolases"/>
    <property type="match status" value="1"/>
</dbReference>
<dbReference type="InterPro" id="IPR027417">
    <property type="entry name" value="P-loop_NTPase"/>
</dbReference>
<dbReference type="InterPro" id="IPR050227">
    <property type="entry name" value="Rab"/>
</dbReference>
<dbReference type="InterPro" id="IPR025662">
    <property type="entry name" value="Sigma_54_int_dom_ATP-bd_1"/>
</dbReference>
<dbReference type="InterPro" id="IPR005225">
    <property type="entry name" value="Small_GTP-bd"/>
</dbReference>
<dbReference type="InterPro" id="IPR001806">
    <property type="entry name" value="Small_GTPase"/>
</dbReference>
<dbReference type="NCBIfam" id="TIGR00231">
    <property type="entry name" value="small_GTP"/>
    <property type="match status" value="1"/>
</dbReference>
<dbReference type="PANTHER" id="PTHR47977">
    <property type="entry name" value="RAS-RELATED PROTEIN RAB"/>
    <property type="match status" value="1"/>
</dbReference>
<dbReference type="Pfam" id="PF00071">
    <property type="entry name" value="Ras"/>
    <property type="match status" value="1"/>
</dbReference>
<dbReference type="PRINTS" id="PR00449">
    <property type="entry name" value="RASTRNSFRMNG"/>
</dbReference>
<dbReference type="SMART" id="SM00177">
    <property type="entry name" value="ARF"/>
    <property type="match status" value="1"/>
</dbReference>
<dbReference type="SMART" id="SM00175">
    <property type="entry name" value="RAB"/>
    <property type="match status" value="1"/>
</dbReference>
<dbReference type="SMART" id="SM00176">
    <property type="entry name" value="RAN"/>
    <property type="match status" value="1"/>
</dbReference>
<dbReference type="SMART" id="SM00173">
    <property type="entry name" value="RAS"/>
    <property type="match status" value="1"/>
</dbReference>
<dbReference type="SMART" id="SM00174">
    <property type="entry name" value="RHO"/>
    <property type="match status" value="1"/>
</dbReference>
<dbReference type="SUPFAM" id="SSF52540">
    <property type="entry name" value="P-loop containing nucleoside triphosphate hydrolases"/>
    <property type="match status" value="1"/>
</dbReference>
<dbReference type="PROSITE" id="PS51419">
    <property type="entry name" value="RAB"/>
    <property type="match status" value="1"/>
</dbReference>
<dbReference type="PROSITE" id="PS00675">
    <property type="entry name" value="SIGMA54_INTERACT_1"/>
    <property type="match status" value="1"/>
</dbReference>
<evidence type="ECO:0000250" key="1"/>
<evidence type="ECO:0000305" key="2"/>
<sequence length="205" mass="22904">MGSSSGQSGYDLSFKILLIGDSGVGKSSLLLSFISSSVEDLAPTIGVDFKIKQMKVRGKRLKLTIWDTAGQEKFRTLTSSYFRGSQGIILVYDVTKRETFLNLADIWAKEIELYSTNHDCIKMLVGNKVDRESERKVSREEGMALAKDLNCLFHECSARTRENVNGCFEELALKIMEVPSLLEEGSSSVKRKPDYRAHQGRCCSS</sequence>
<name>RAC2B_ARATH</name>
<comment type="function">
    <text evidence="1">Intracellular vesicle trafficking and protein transport.</text>
</comment>
<comment type="subcellular location">
    <subcellularLocation>
        <location evidence="2">Cell membrane</location>
        <topology evidence="2">Lipid-anchor</topology>
        <orientation evidence="2">Cytoplasmic side</orientation>
    </subcellularLocation>
</comment>
<comment type="similarity">
    <text evidence="2">Belongs to the small GTPase superfamily. Rab family.</text>
</comment>
<feature type="chain" id="PRO_0000407359" description="Ras-related protein RABC2b">
    <location>
        <begin position="1"/>
        <end position="205"/>
    </location>
</feature>
<feature type="short sequence motif" description="Effector region" evidence="1">
    <location>
        <begin position="41"/>
        <end position="49"/>
    </location>
</feature>
<feature type="binding site" evidence="1">
    <location>
        <begin position="20"/>
        <end position="27"/>
    </location>
    <ligand>
        <name>GTP</name>
        <dbReference type="ChEBI" id="CHEBI:37565"/>
    </ligand>
</feature>
<feature type="binding site" evidence="1">
    <location>
        <begin position="67"/>
        <end position="71"/>
    </location>
    <ligand>
        <name>GTP</name>
        <dbReference type="ChEBI" id="CHEBI:37565"/>
    </ligand>
</feature>
<feature type="binding site" evidence="1">
    <location>
        <begin position="127"/>
        <end position="130"/>
    </location>
    <ligand>
        <name>GTP</name>
        <dbReference type="ChEBI" id="CHEBI:37565"/>
    </ligand>
</feature>
<feature type="binding site" evidence="1">
    <location>
        <begin position="157"/>
        <end position="158"/>
    </location>
    <ligand>
        <name>GTP</name>
        <dbReference type="ChEBI" id="CHEBI:37565"/>
    </ligand>
</feature>
<feature type="lipid moiety-binding region" description="S-geranylgeranyl cysteine" evidence="1">
    <location>
        <position position="202"/>
    </location>
</feature>
<feature type="lipid moiety-binding region" description="S-geranylgeranyl cysteine" evidence="1">
    <location>
        <position position="203"/>
    </location>
</feature>
<gene>
    <name type="primary">RABC2B</name>
    <name type="synonym">RAB18C</name>
    <name type="ordered locus">At3g09910</name>
    <name type="ORF">F8A24.4</name>
</gene>
<proteinExistence type="evidence at transcript level"/>
<organism>
    <name type="scientific">Arabidopsis thaliana</name>
    <name type="common">Mouse-ear cress</name>
    <dbReference type="NCBI Taxonomy" id="3702"/>
    <lineage>
        <taxon>Eukaryota</taxon>
        <taxon>Viridiplantae</taxon>
        <taxon>Streptophyta</taxon>
        <taxon>Embryophyta</taxon>
        <taxon>Tracheophyta</taxon>
        <taxon>Spermatophyta</taxon>
        <taxon>Magnoliopsida</taxon>
        <taxon>eudicotyledons</taxon>
        <taxon>Gunneridae</taxon>
        <taxon>Pentapetalae</taxon>
        <taxon>rosids</taxon>
        <taxon>malvids</taxon>
        <taxon>Brassicales</taxon>
        <taxon>Brassicaceae</taxon>
        <taxon>Camelineae</taxon>
        <taxon>Arabidopsis</taxon>
    </lineage>
</organism>
<accession>Q9SF92</accession>